<name>ASSY_SHEDO</name>
<keyword id="KW-0028">Amino-acid biosynthesis</keyword>
<keyword id="KW-0055">Arginine biosynthesis</keyword>
<keyword id="KW-0067">ATP-binding</keyword>
<keyword id="KW-0963">Cytoplasm</keyword>
<keyword id="KW-0436">Ligase</keyword>
<keyword id="KW-0547">Nucleotide-binding</keyword>
<keyword id="KW-1185">Reference proteome</keyword>
<comment type="catalytic activity">
    <reaction evidence="1">
        <text>L-citrulline + L-aspartate + ATP = 2-(N(omega)-L-arginino)succinate + AMP + diphosphate + H(+)</text>
        <dbReference type="Rhea" id="RHEA:10932"/>
        <dbReference type="ChEBI" id="CHEBI:15378"/>
        <dbReference type="ChEBI" id="CHEBI:29991"/>
        <dbReference type="ChEBI" id="CHEBI:30616"/>
        <dbReference type="ChEBI" id="CHEBI:33019"/>
        <dbReference type="ChEBI" id="CHEBI:57472"/>
        <dbReference type="ChEBI" id="CHEBI:57743"/>
        <dbReference type="ChEBI" id="CHEBI:456215"/>
        <dbReference type="EC" id="6.3.4.5"/>
    </reaction>
</comment>
<comment type="pathway">
    <text evidence="1">Amino-acid biosynthesis; L-arginine biosynthesis; L-arginine from L-ornithine and carbamoyl phosphate: step 2/3.</text>
</comment>
<comment type="subunit">
    <text evidence="1">Homotetramer.</text>
</comment>
<comment type="subcellular location">
    <subcellularLocation>
        <location evidence="1">Cytoplasm</location>
    </subcellularLocation>
</comment>
<comment type="similarity">
    <text evidence="1">Belongs to the argininosuccinate synthase family. Type 1 subfamily.</text>
</comment>
<proteinExistence type="inferred from homology"/>
<sequence length="407" mass="44615">MSSTVKKTGVKKVVLAYSGGLDTSAIIPWLKETYDDCEIVAFCADVGQGEEELVGLTEKALASGASECHIVDLKEEFVKDYIYPTIATGAIYEGTYLLGTSMARPIIAKAQVEVARKVGADALCHGCTGKGNDQVRFEGCFAALAPDLKVIAPWREWEMRSREDLLAYLAARDIQTSASATKIYSRDANAWHISHEGGELEDPWNEPSKGVWTLTVAPEDAPDEAEYVALSIKHGRVTHVNEQVLSPYNALMKLNDIASKHGVGRIDITENRLVGMKSRGCYETPGGTVMFAGLRAIEELVLDKTSRTWREQVAAQMAHLVYDGRWFTPLCNSLLAASESLAEAVNGDVVIKLYKGQATAVKKRSPNSLYSESFATFGEDDVYDQKHAEGFIRLYSLASRIRAMNSN</sequence>
<feature type="chain" id="PRO_0000263969" description="Argininosuccinate synthase">
    <location>
        <begin position="1"/>
        <end position="407"/>
    </location>
</feature>
<feature type="binding site" evidence="1">
    <location>
        <begin position="16"/>
        <end position="24"/>
    </location>
    <ligand>
        <name>ATP</name>
        <dbReference type="ChEBI" id="CHEBI:30616"/>
    </ligand>
</feature>
<feature type="binding site" evidence="1">
    <location>
        <position position="44"/>
    </location>
    <ligand>
        <name>ATP</name>
        <dbReference type="ChEBI" id="CHEBI:30616"/>
    </ligand>
</feature>
<feature type="binding site" evidence="1">
    <location>
        <position position="96"/>
    </location>
    <ligand>
        <name>L-citrulline</name>
        <dbReference type="ChEBI" id="CHEBI:57743"/>
    </ligand>
</feature>
<feature type="binding site" evidence="1">
    <location>
        <position position="101"/>
    </location>
    <ligand>
        <name>L-citrulline</name>
        <dbReference type="ChEBI" id="CHEBI:57743"/>
    </ligand>
</feature>
<feature type="binding site" evidence="1">
    <location>
        <position position="126"/>
    </location>
    <ligand>
        <name>ATP</name>
        <dbReference type="ChEBI" id="CHEBI:30616"/>
    </ligand>
</feature>
<feature type="binding site" evidence="1">
    <location>
        <position position="128"/>
    </location>
    <ligand>
        <name>L-aspartate</name>
        <dbReference type="ChEBI" id="CHEBI:29991"/>
    </ligand>
</feature>
<feature type="binding site" evidence="1">
    <location>
        <position position="132"/>
    </location>
    <ligand>
        <name>L-aspartate</name>
        <dbReference type="ChEBI" id="CHEBI:29991"/>
    </ligand>
</feature>
<feature type="binding site" evidence="1">
    <location>
        <position position="132"/>
    </location>
    <ligand>
        <name>L-citrulline</name>
        <dbReference type="ChEBI" id="CHEBI:57743"/>
    </ligand>
</feature>
<feature type="binding site" evidence="1">
    <location>
        <position position="133"/>
    </location>
    <ligand>
        <name>L-aspartate</name>
        <dbReference type="ChEBI" id="CHEBI:29991"/>
    </ligand>
</feature>
<feature type="binding site" evidence="1">
    <location>
        <position position="136"/>
    </location>
    <ligand>
        <name>L-citrulline</name>
        <dbReference type="ChEBI" id="CHEBI:57743"/>
    </ligand>
</feature>
<feature type="binding site" evidence="1">
    <location>
        <position position="185"/>
    </location>
    <ligand>
        <name>L-citrulline</name>
        <dbReference type="ChEBI" id="CHEBI:57743"/>
    </ligand>
</feature>
<feature type="binding site" evidence="1">
    <location>
        <position position="194"/>
    </location>
    <ligand>
        <name>L-citrulline</name>
        <dbReference type="ChEBI" id="CHEBI:57743"/>
    </ligand>
</feature>
<feature type="binding site" evidence="1">
    <location>
        <position position="270"/>
    </location>
    <ligand>
        <name>L-citrulline</name>
        <dbReference type="ChEBI" id="CHEBI:57743"/>
    </ligand>
</feature>
<feature type="binding site" evidence="1">
    <location>
        <position position="282"/>
    </location>
    <ligand>
        <name>L-citrulline</name>
        <dbReference type="ChEBI" id="CHEBI:57743"/>
    </ligand>
</feature>
<organism>
    <name type="scientific">Shewanella denitrificans (strain OS217 / ATCC BAA-1090 / DSM 15013)</name>
    <dbReference type="NCBI Taxonomy" id="318161"/>
    <lineage>
        <taxon>Bacteria</taxon>
        <taxon>Pseudomonadati</taxon>
        <taxon>Pseudomonadota</taxon>
        <taxon>Gammaproteobacteria</taxon>
        <taxon>Alteromonadales</taxon>
        <taxon>Shewanellaceae</taxon>
        <taxon>Shewanella</taxon>
    </lineage>
</organism>
<accession>Q12SM7</accession>
<gene>
    <name evidence="1" type="primary">argG</name>
    <name type="ordered locus">Sden_0253</name>
</gene>
<reference key="1">
    <citation type="submission" date="2006-03" db="EMBL/GenBank/DDBJ databases">
        <title>Complete sequence of Shewanella denitrificans OS217.</title>
        <authorList>
            <consortium name="US DOE Joint Genome Institute"/>
            <person name="Copeland A."/>
            <person name="Lucas S."/>
            <person name="Lapidus A."/>
            <person name="Barry K."/>
            <person name="Detter J.C."/>
            <person name="Glavina del Rio T."/>
            <person name="Hammon N."/>
            <person name="Israni S."/>
            <person name="Dalin E."/>
            <person name="Tice H."/>
            <person name="Pitluck S."/>
            <person name="Brettin T."/>
            <person name="Bruce D."/>
            <person name="Han C."/>
            <person name="Tapia R."/>
            <person name="Gilna P."/>
            <person name="Kiss H."/>
            <person name="Schmutz J."/>
            <person name="Larimer F."/>
            <person name="Land M."/>
            <person name="Hauser L."/>
            <person name="Kyrpides N."/>
            <person name="Lykidis A."/>
            <person name="Richardson P."/>
        </authorList>
    </citation>
    <scope>NUCLEOTIDE SEQUENCE [LARGE SCALE GENOMIC DNA]</scope>
    <source>
        <strain>OS217 / ATCC BAA-1090 / DSM 15013</strain>
    </source>
</reference>
<protein>
    <recommendedName>
        <fullName evidence="1">Argininosuccinate synthase</fullName>
        <ecNumber evidence="1">6.3.4.5</ecNumber>
    </recommendedName>
    <alternativeName>
        <fullName evidence="1">Citrulline--aspartate ligase</fullName>
    </alternativeName>
</protein>
<dbReference type="EC" id="6.3.4.5" evidence="1"/>
<dbReference type="EMBL" id="CP000302">
    <property type="protein sequence ID" value="ABE53549.1"/>
    <property type="molecule type" value="Genomic_DNA"/>
</dbReference>
<dbReference type="RefSeq" id="WP_011494716.1">
    <property type="nucleotide sequence ID" value="NC_007954.1"/>
</dbReference>
<dbReference type="SMR" id="Q12SM7"/>
<dbReference type="STRING" id="318161.Sden_0253"/>
<dbReference type="KEGG" id="sdn:Sden_0253"/>
<dbReference type="eggNOG" id="COG0137">
    <property type="taxonomic scope" value="Bacteria"/>
</dbReference>
<dbReference type="HOGENOM" id="CLU_032784_4_2_6"/>
<dbReference type="OrthoDB" id="9801641at2"/>
<dbReference type="UniPathway" id="UPA00068">
    <property type="reaction ID" value="UER00113"/>
</dbReference>
<dbReference type="Proteomes" id="UP000001982">
    <property type="component" value="Chromosome"/>
</dbReference>
<dbReference type="GO" id="GO:0005737">
    <property type="term" value="C:cytoplasm"/>
    <property type="evidence" value="ECO:0007669"/>
    <property type="project" value="UniProtKB-SubCell"/>
</dbReference>
<dbReference type="GO" id="GO:0004055">
    <property type="term" value="F:argininosuccinate synthase activity"/>
    <property type="evidence" value="ECO:0007669"/>
    <property type="project" value="UniProtKB-UniRule"/>
</dbReference>
<dbReference type="GO" id="GO:0005524">
    <property type="term" value="F:ATP binding"/>
    <property type="evidence" value="ECO:0007669"/>
    <property type="project" value="UniProtKB-UniRule"/>
</dbReference>
<dbReference type="GO" id="GO:0000053">
    <property type="term" value="P:argininosuccinate metabolic process"/>
    <property type="evidence" value="ECO:0007669"/>
    <property type="project" value="TreeGrafter"/>
</dbReference>
<dbReference type="GO" id="GO:0006526">
    <property type="term" value="P:L-arginine biosynthetic process"/>
    <property type="evidence" value="ECO:0007669"/>
    <property type="project" value="UniProtKB-UniRule"/>
</dbReference>
<dbReference type="GO" id="GO:0000050">
    <property type="term" value="P:urea cycle"/>
    <property type="evidence" value="ECO:0007669"/>
    <property type="project" value="TreeGrafter"/>
</dbReference>
<dbReference type="CDD" id="cd01999">
    <property type="entry name" value="ASS"/>
    <property type="match status" value="1"/>
</dbReference>
<dbReference type="FunFam" id="1.20.5.470:FF:000005">
    <property type="entry name" value="Argininosuccinate synthase"/>
    <property type="match status" value="1"/>
</dbReference>
<dbReference type="FunFam" id="3.40.50.620:FF:000019">
    <property type="entry name" value="Argininosuccinate synthase"/>
    <property type="match status" value="1"/>
</dbReference>
<dbReference type="FunFam" id="3.90.1260.10:FF:000007">
    <property type="entry name" value="Argininosuccinate synthase"/>
    <property type="match status" value="1"/>
</dbReference>
<dbReference type="Gene3D" id="3.90.1260.10">
    <property type="entry name" value="Argininosuccinate synthetase, chain A, domain 2"/>
    <property type="match status" value="1"/>
</dbReference>
<dbReference type="Gene3D" id="3.40.50.620">
    <property type="entry name" value="HUPs"/>
    <property type="match status" value="1"/>
</dbReference>
<dbReference type="Gene3D" id="1.20.5.470">
    <property type="entry name" value="Single helix bin"/>
    <property type="match status" value="1"/>
</dbReference>
<dbReference type="HAMAP" id="MF_00005">
    <property type="entry name" value="Arg_succ_synth_type1"/>
    <property type="match status" value="1"/>
</dbReference>
<dbReference type="InterPro" id="IPR048268">
    <property type="entry name" value="Arginosuc_syn_C"/>
</dbReference>
<dbReference type="InterPro" id="IPR048267">
    <property type="entry name" value="Arginosuc_syn_N"/>
</dbReference>
<dbReference type="InterPro" id="IPR001518">
    <property type="entry name" value="Arginosuc_synth"/>
</dbReference>
<dbReference type="InterPro" id="IPR018223">
    <property type="entry name" value="Arginosuc_synth_CS"/>
</dbReference>
<dbReference type="InterPro" id="IPR023434">
    <property type="entry name" value="Arginosuc_synth_type_1_subfam"/>
</dbReference>
<dbReference type="InterPro" id="IPR024074">
    <property type="entry name" value="AS_cat/multimer_dom_body"/>
</dbReference>
<dbReference type="InterPro" id="IPR014729">
    <property type="entry name" value="Rossmann-like_a/b/a_fold"/>
</dbReference>
<dbReference type="NCBIfam" id="TIGR00032">
    <property type="entry name" value="argG"/>
    <property type="match status" value="1"/>
</dbReference>
<dbReference type="NCBIfam" id="NF001770">
    <property type="entry name" value="PRK00509.1"/>
    <property type="match status" value="1"/>
</dbReference>
<dbReference type="PANTHER" id="PTHR11587">
    <property type="entry name" value="ARGININOSUCCINATE SYNTHASE"/>
    <property type="match status" value="1"/>
</dbReference>
<dbReference type="PANTHER" id="PTHR11587:SF2">
    <property type="entry name" value="ARGININOSUCCINATE SYNTHASE"/>
    <property type="match status" value="1"/>
</dbReference>
<dbReference type="Pfam" id="PF20979">
    <property type="entry name" value="Arginosuc_syn_C"/>
    <property type="match status" value="1"/>
</dbReference>
<dbReference type="Pfam" id="PF00764">
    <property type="entry name" value="Arginosuc_synth"/>
    <property type="match status" value="1"/>
</dbReference>
<dbReference type="SUPFAM" id="SSF52402">
    <property type="entry name" value="Adenine nucleotide alpha hydrolases-like"/>
    <property type="match status" value="1"/>
</dbReference>
<dbReference type="SUPFAM" id="SSF69864">
    <property type="entry name" value="Argininosuccinate synthetase, C-terminal domain"/>
    <property type="match status" value="1"/>
</dbReference>
<dbReference type="PROSITE" id="PS00564">
    <property type="entry name" value="ARGININOSUCCIN_SYN_1"/>
    <property type="match status" value="1"/>
</dbReference>
<dbReference type="PROSITE" id="PS00565">
    <property type="entry name" value="ARGININOSUCCIN_SYN_2"/>
    <property type="match status" value="1"/>
</dbReference>
<evidence type="ECO:0000255" key="1">
    <source>
        <dbReference type="HAMAP-Rule" id="MF_00005"/>
    </source>
</evidence>